<sequence>MVYSDTKTSKKIKKYKINIMKKKLNIFQIPLKGIHLIEASAGTGKTSTIAFLYLRLLLGLEKNKENIRKLSVKEILVVTFTNAAKEELYIRIKKSIKELHLSCIKKKSKDPIFQSFLTKIKNFDEAIHILEDAKININNAAIYTIHGFCQDVLENNTLISNREIIENESFLYLQATQDFWRYFFYNLPKKIIKIIYEEYRSPEDLLREIKPILKVNSSINFKKKFDKKETLITFHEKIINKINIFKQKWLNYNLIILKIINQLKVNKKIYSNFNILKWKKKITEWAESETKNYKMPICLKYFSETSIEKNIKNYNFKKHIFFEEIDKILKKNFSLKNIILFYAIKNIPKFVKREKEKKLLLGFNDLLKILLKNIKKEESLREIIIKQYPVALIDEFQDTNIQQYQIFNTLYKNKKTALFLVGDPKQSIYSFRGADIFSYLHAKFKIKNYYYLDTNWRSSKNICKAINYLFSKNKNPFYFKNIPFEPILSSSKNLNMKFKIKEKNQTAISFFFQKKEEVNIEEYRDWIAKQCANEISYWLTCSKKGEAIISDGSQERILTEKDIVILVRNRTEAQIIKESLKKVNILSKYSSPYESVFKTFDALELLSILKSILDPTDINLLKKSILTHILNKIAFQKIKENSKTKISHFLIQKLYEYNDKWKTIGIFYTIKTMILEYQKYANNFEMYKNQQRNINFLHIAELLQEKSQNCYKENSLMRWFEKKILEKNNISENEYIKNFAESKIIRIITIHKSKGLEYPIVWIPFIVDFNVSKSYFYHEKKTLKIFFDNNKSSETLKKSDEERLAEDLRFLYVALTRSIYHCSIGISYLVKKRKKNKKSSDIHKSSLGYIIQNGKCMNYKELLYELKILNKKLYIEVKYQAMNCKSLTIKKDDLYILSQPQFLLKEIKLYSQITSFTKIKQENKHFNNIQYNNIESYFFKEKDKKKTIHNFPHGNKAGIFIHYILKTIKFNNTFNIDWFYTILKKYEFSEKWAKTLMFWINNILNFKINNLNITLSSLKKTQYIKELEFFLPIKNTLYCEDLNQIIQSIDLISSISQKIFFNPVIGILKGFIDLVFIFNKKYYILDYKCNYLGNNDNCYSSKNIKKEIIKNRYDIQYQLYTLALHQYLKKKVKQYHYKTHFGGVFYLFLRGINVKDSIFYILPDYLLIKKLTKLILQKK</sequence>
<gene>
    <name evidence="1" type="primary">recB</name>
    <name type="ordered locus">BUsg_439</name>
</gene>
<organism>
    <name type="scientific">Buchnera aphidicola subsp. Schizaphis graminum (strain Sg)</name>
    <dbReference type="NCBI Taxonomy" id="198804"/>
    <lineage>
        <taxon>Bacteria</taxon>
        <taxon>Pseudomonadati</taxon>
        <taxon>Pseudomonadota</taxon>
        <taxon>Gammaproteobacteria</taxon>
        <taxon>Enterobacterales</taxon>
        <taxon>Erwiniaceae</taxon>
        <taxon>Buchnera</taxon>
    </lineage>
</organism>
<dbReference type="EC" id="3.1.11.5" evidence="1"/>
<dbReference type="EC" id="5.6.2.4" evidence="1"/>
<dbReference type="EMBL" id="AE013218">
    <property type="protein sequence ID" value="AAM67982.1"/>
    <property type="molecule type" value="Genomic_DNA"/>
</dbReference>
<dbReference type="RefSeq" id="WP_011053949.1">
    <property type="nucleotide sequence ID" value="NC_004061.1"/>
</dbReference>
<dbReference type="SMR" id="Q8K9A9"/>
<dbReference type="STRING" id="198804.BUsg_439"/>
<dbReference type="GeneID" id="93003911"/>
<dbReference type="KEGG" id="bas:BUsg_439"/>
<dbReference type="eggNOG" id="COG1074">
    <property type="taxonomic scope" value="Bacteria"/>
</dbReference>
<dbReference type="HOGENOM" id="CLU_001114_6_0_6"/>
<dbReference type="Proteomes" id="UP000000416">
    <property type="component" value="Chromosome"/>
</dbReference>
<dbReference type="GO" id="GO:0005829">
    <property type="term" value="C:cytosol"/>
    <property type="evidence" value="ECO:0007669"/>
    <property type="project" value="TreeGrafter"/>
</dbReference>
<dbReference type="GO" id="GO:0009338">
    <property type="term" value="C:exodeoxyribonuclease V complex"/>
    <property type="evidence" value="ECO:0007669"/>
    <property type="project" value="TreeGrafter"/>
</dbReference>
<dbReference type="GO" id="GO:0043138">
    <property type="term" value="F:3'-5' DNA helicase activity"/>
    <property type="evidence" value="ECO:0007669"/>
    <property type="project" value="UniProtKB-UniRule"/>
</dbReference>
<dbReference type="GO" id="GO:0005524">
    <property type="term" value="F:ATP binding"/>
    <property type="evidence" value="ECO:0007669"/>
    <property type="project" value="UniProtKB-UniRule"/>
</dbReference>
<dbReference type="GO" id="GO:0016887">
    <property type="term" value="F:ATP hydrolysis activity"/>
    <property type="evidence" value="ECO:0007669"/>
    <property type="project" value="RHEA"/>
</dbReference>
<dbReference type="GO" id="GO:0003677">
    <property type="term" value="F:DNA binding"/>
    <property type="evidence" value="ECO:0007669"/>
    <property type="project" value="UniProtKB-UniRule"/>
</dbReference>
<dbReference type="GO" id="GO:0008854">
    <property type="term" value="F:exodeoxyribonuclease V activity"/>
    <property type="evidence" value="ECO:0007669"/>
    <property type="project" value="UniProtKB-EC"/>
</dbReference>
<dbReference type="GO" id="GO:0000287">
    <property type="term" value="F:magnesium ion binding"/>
    <property type="evidence" value="ECO:0007669"/>
    <property type="project" value="UniProtKB-UniRule"/>
</dbReference>
<dbReference type="GO" id="GO:0000724">
    <property type="term" value="P:double-strand break repair via homologous recombination"/>
    <property type="evidence" value="ECO:0007669"/>
    <property type="project" value="UniProtKB-UniRule"/>
</dbReference>
<dbReference type="CDD" id="cd22352">
    <property type="entry name" value="RecB_C-like"/>
    <property type="match status" value="1"/>
</dbReference>
<dbReference type="Gene3D" id="3.90.320.10">
    <property type="match status" value="1"/>
</dbReference>
<dbReference type="Gene3D" id="3.40.50.300">
    <property type="entry name" value="P-loop containing nucleotide triphosphate hydrolases"/>
    <property type="match status" value="2"/>
</dbReference>
<dbReference type="Gene3D" id="1.10.486.10">
    <property type="entry name" value="PCRA, domain 4"/>
    <property type="match status" value="1"/>
</dbReference>
<dbReference type="Gene3D" id="1.10.3170.10">
    <property type="entry name" value="Recbcd, chain B, domain 2"/>
    <property type="match status" value="1"/>
</dbReference>
<dbReference type="HAMAP" id="MF_01485">
    <property type="entry name" value="RecB"/>
    <property type="match status" value="1"/>
</dbReference>
<dbReference type="InterPro" id="IPR014017">
    <property type="entry name" value="DNA_helicase_UvrD-like_C"/>
</dbReference>
<dbReference type="InterPro" id="IPR000212">
    <property type="entry name" value="DNA_helicase_UvrD/REP"/>
</dbReference>
<dbReference type="InterPro" id="IPR027417">
    <property type="entry name" value="P-loop_NTPase"/>
</dbReference>
<dbReference type="InterPro" id="IPR011604">
    <property type="entry name" value="PDDEXK-like_dom_sf"/>
</dbReference>
<dbReference type="InterPro" id="IPR004586">
    <property type="entry name" value="RecB"/>
</dbReference>
<dbReference type="InterPro" id="IPR011335">
    <property type="entry name" value="Restrct_endonuc-II-like"/>
</dbReference>
<dbReference type="InterPro" id="IPR014016">
    <property type="entry name" value="UvrD-like_ATP-bd"/>
</dbReference>
<dbReference type="NCBIfam" id="TIGR00609">
    <property type="entry name" value="recB"/>
    <property type="match status" value="1"/>
</dbReference>
<dbReference type="PANTHER" id="PTHR11070:SF23">
    <property type="entry name" value="RECBCD ENZYME SUBUNIT RECB"/>
    <property type="match status" value="1"/>
</dbReference>
<dbReference type="PANTHER" id="PTHR11070">
    <property type="entry name" value="UVRD / RECB / PCRA DNA HELICASE FAMILY MEMBER"/>
    <property type="match status" value="1"/>
</dbReference>
<dbReference type="Pfam" id="PF00580">
    <property type="entry name" value="UvrD-helicase"/>
    <property type="match status" value="1"/>
</dbReference>
<dbReference type="Pfam" id="PF13361">
    <property type="entry name" value="UvrD_C"/>
    <property type="match status" value="1"/>
</dbReference>
<dbReference type="SUPFAM" id="SSF52540">
    <property type="entry name" value="P-loop containing nucleoside triphosphate hydrolases"/>
    <property type="match status" value="1"/>
</dbReference>
<dbReference type="SUPFAM" id="SSF52980">
    <property type="entry name" value="Restriction endonuclease-like"/>
    <property type="match status" value="1"/>
</dbReference>
<dbReference type="PROSITE" id="PS51198">
    <property type="entry name" value="UVRD_HELICASE_ATP_BIND"/>
    <property type="match status" value="1"/>
</dbReference>
<dbReference type="PROSITE" id="PS51217">
    <property type="entry name" value="UVRD_HELICASE_CTER"/>
    <property type="match status" value="1"/>
</dbReference>
<protein>
    <recommendedName>
        <fullName evidence="1">RecBCD enzyme subunit RecB</fullName>
        <ecNumber evidence="1">3.1.11.5</ecNumber>
        <ecNumber evidence="1">5.6.2.4</ecNumber>
    </recommendedName>
    <alternativeName>
        <fullName evidence="1">DNA 3'-5' helicase subunit RecB</fullName>
    </alternativeName>
    <alternativeName>
        <fullName evidence="1">Exonuclease V subunit RecB</fullName>
        <shortName evidence="1">ExoV subunit RecB</shortName>
    </alternativeName>
    <alternativeName>
        <fullName evidence="1">Helicase/nuclease RecBCD subunit RecB</fullName>
    </alternativeName>
</protein>
<reference key="1">
    <citation type="journal article" date="2002" name="Science">
        <title>50 million years of genomic stasis in endosymbiotic bacteria.</title>
        <authorList>
            <person name="Tamas I."/>
            <person name="Klasson L."/>
            <person name="Canbaeck B."/>
            <person name="Naeslund A.K."/>
            <person name="Eriksson A.-S."/>
            <person name="Wernegreen J.J."/>
            <person name="Sandstroem J.P."/>
            <person name="Moran N.A."/>
            <person name="Andersson S.G.E."/>
        </authorList>
    </citation>
    <scope>NUCLEOTIDE SEQUENCE [LARGE SCALE GENOMIC DNA]</scope>
    <source>
        <strain>Sg</strain>
    </source>
</reference>
<keyword id="KW-0067">ATP-binding</keyword>
<keyword id="KW-0227">DNA damage</keyword>
<keyword id="KW-0234">DNA repair</keyword>
<keyword id="KW-0238">DNA-binding</keyword>
<keyword id="KW-0269">Exonuclease</keyword>
<keyword id="KW-0347">Helicase</keyword>
<keyword id="KW-0378">Hydrolase</keyword>
<keyword id="KW-0413">Isomerase</keyword>
<keyword id="KW-0460">Magnesium</keyword>
<keyword id="KW-0479">Metal-binding</keyword>
<keyword id="KW-0540">Nuclease</keyword>
<keyword id="KW-0547">Nucleotide-binding</keyword>
<comment type="function">
    <text evidence="1">A helicase/nuclease that prepares dsDNA breaks (DSB) for recombinational DNA repair. Binds to DSBs and unwinds DNA via a highly rapid and processive ATP-dependent bidirectional helicase activity. Unwinds dsDNA until it encounters a Chi (crossover hotspot instigator) sequence from the 3' direction. Cuts ssDNA a few nucleotides 3' to the Chi site. The properties and activities of the enzyme are changed at Chi. The Chi-altered holoenzyme produces a long 3'-ssDNA overhang and facilitates RecA-binding to the ssDNA for homologous DNA recombination and repair. Holoenzyme degrades any linearized DNA that is unable to undergo homologous recombination. In the holoenzyme this subunit contributes ATPase, 3'-5' helicase, exonuclease activity and loads RecA onto ssDNA.</text>
</comment>
<comment type="catalytic activity">
    <reaction evidence="1">
        <text>Exonucleolytic cleavage (in the presence of ATP) in either 5'- to 3'- or 3'- to 5'-direction to yield 5'-phosphooligonucleotides.</text>
        <dbReference type="EC" id="3.1.11.5"/>
    </reaction>
</comment>
<comment type="catalytic activity">
    <reaction evidence="1">
        <text>Couples ATP hydrolysis with the unwinding of duplex DNA by translocating in the 3'-5' direction.</text>
        <dbReference type="EC" id="5.6.2.4"/>
    </reaction>
</comment>
<comment type="catalytic activity">
    <reaction evidence="1">
        <text>ATP + H2O = ADP + phosphate + H(+)</text>
        <dbReference type="Rhea" id="RHEA:13065"/>
        <dbReference type="ChEBI" id="CHEBI:15377"/>
        <dbReference type="ChEBI" id="CHEBI:15378"/>
        <dbReference type="ChEBI" id="CHEBI:30616"/>
        <dbReference type="ChEBI" id="CHEBI:43474"/>
        <dbReference type="ChEBI" id="CHEBI:456216"/>
        <dbReference type="EC" id="5.6.2.4"/>
    </reaction>
</comment>
<comment type="cofactor">
    <cofactor evidence="1">
        <name>Mg(2+)</name>
        <dbReference type="ChEBI" id="CHEBI:18420"/>
    </cofactor>
    <text evidence="1">Binds 1 Mg(2+) ion per subunit.</text>
</comment>
<comment type="subunit">
    <text evidence="1">Heterotrimer of RecB, RecC and RecD. All subunits contribute to DNA-binding. Interacts with RecA.</text>
</comment>
<comment type="domain">
    <text evidence="1">The N-terminal DNA-binding domain is a ssDNA-dependent ATPase and has ATP-dependent 3'-5' helicase function. This domain interacts with RecC.</text>
</comment>
<comment type="domain">
    <text evidence="1">The C-terminal domain has nuclease activity and interacts with RecD. It interacts with RecA, facilitating its loading onto ssDNA.</text>
</comment>
<comment type="miscellaneous">
    <text evidence="1">In the RecBCD complex, RecB has a slow 3'-5' helicase, an exonuclease activity and loads RecA onto ssDNA, RecD has a fast 5'-3' helicase activity, while RecC stimulates the ATPase and processivity of the RecB helicase and contributes to recognition of the Chi site.</text>
</comment>
<comment type="similarity">
    <text evidence="1">Belongs to the helicase family. UvrD subfamily.</text>
</comment>
<evidence type="ECO:0000255" key="1">
    <source>
        <dbReference type="HAMAP-Rule" id="MF_01485"/>
    </source>
</evidence>
<accession>Q8K9A9</accession>
<name>RECB_BUCAP</name>
<proteinExistence type="inferred from homology"/>
<feature type="chain" id="PRO_0000102041" description="RecBCD enzyme subunit RecB">
    <location>
        <begin position="1"/>
        <end position="1179"/>
    </location>
</feature>
<feature type="domain" description="UvrD-like helicase ATP-binding" evidence="1">
    <location>
        <begin position="18"/>
        <end position="459"/>
    </location>
</feature>
<feature type="domain" description="UvrD-like helicase C-terminal" evidence="1">
    <location>
        <begin position="485"/>
        <end position="755"/>
    </location>
</feature>
<feature type="region of interest" description="DNA-binding and helicase activity, interacts with RecC" evidence="1">
    <location>
        <begin position="1"/>
        <end position="859"/>
    </location>
</feature>
<feature type="region of interest" description="Nuclease activity, interacts with RecD and RecA" evidence="1">
    <location>
        <begin position="910"/>
        <end position="1179"/>
    </location>
</feature>
<feature type="active site" description="For nuclease activity" evidence="1">
    <location>
        <position position="1086"/>
    </location>
</feature>
<feature type="binding site" evidence="1">
    <location>
        <begin position="39"/>
        <end position="46"/>
    </location>
    <ligand>
        <name>ATP</name>
        <dbReference type="ChEBI" id="CHEBI:30616"/>
    </ligand>
</feature>
<feature type="binding site" evidence="1">
    <location>
        <position position="962"/>
    </location>
    <ligand>
        <name>Mg(2+)</name>
        <dbReference type="ChEBI" id="CHEBI:18420"/>
    </ligand>
</feature>
<feature type="binding site" evidence="1">
    <location>
        <position position="1073"/>
    </location>
    <ligand>
        <name>Mg(2+)</name>
        <dbReference type="ChEBI" id="CHEBI:18420"/>
    </ligand>
</feature>
<feature type="binding site" evidence="1">
    <location>
        <position position="1086"/>
    </location>
    <ligand>
        <name>Mg(2+)</name>
        <dbReference type="ChEBI" id="CHEBI:18420"/>
    </ligand>
</feature>